<keyword id="KW-0030">Aminoacyl-tRNA synthetase</keyword>
<keyword id="KW-0067">ATP-binding</keyword>
<keyword id="KW-0963">Cytoplasm</keyword>
<keyword id="KW-0436">Ligase</keyword>
<keyword id="KW-0460">Magnesium</keyword>
<keyword id="KW-0479">Metal-binding</keyword>
<keyword id="KW-0547">Nucleotide-binding</keyword>
<keyword id="KW-0648">Protein biosynthesis</keyword>
<keyword id="KW-1185">Reference proteome</keyword>
<protein>
    <recommendedName>
        <fullName>Phenylalanine--tRNA ligase beta subunit</fullName>
        <ecNumber evidence="2">6.1.1.20</ecNumber>
    </recommendedName>
    <alternativeName>
        <fullName>Phenylalanyl-tRNA synthetase beta subunit</fullName>
        <shortName>PheRS</shortName>
    </alternativeName>
</protein>
<comment type="catalytic activity">
    <reaction evidence="2">
        <text>tRNA(Phe) + L-phenylalanine + ATP = L-phenylalanyl-tRNA(Phe) + AMP + diphosphate + H(+)</text>
        <dbReference type="Rhea" id="RHEA:19413"/>
        <dbReference type="Rhea" id="RHEA-COMP:9668"/>
        <dbReference type="Rhea" id="RHEA-COMP:9699"/>
        <dbReference type="ChEBI" id="CHEBI:15378"/>
        <dbReference type="ChEBI" id="CHEBI:30616"/>
        <dbReference type="ChEBI" id="CHEBI:33019"/>
        <dbReference type="ChEBI" id="CHEBI:58095"/>
        <dbReference type="ChEBI" id="CHEBI:78442"/>
        <dbReference type="ChEBI" id="CHEBI:78531"/>
        <dbReference type="ChEBI" id="CHEBI:456215"/>
        <dbReference type="EC" id="6.1.1.20"/>
    </reaction>
    <physiologicalReaction direction="left-to-right" evidence="2">
        <dbReference type="Rhea" id="RHEA:19414"/>
    </physiologicalReaction>
</comment>
<comment type="cofactor">
    <cofactor evidence="1">
        <name>Mg(2+)</name>
        <dbReference type="ChEBI" id="CHEBI:18420"/>
    </cofactor>
</comment>
<comment type="subunit">
    <text evidence="2">Heterotetramer; dimer of two heterodimers formed by FARSA and FARSB.</text>
</comment>
<comment type="subcellular location">
    <subcellularLocation>
        <location evidence="2">Cytoplasm</location>
    </subcellularLocation>
</comment>
<comment type="similarity">
    <text evidence="4">Belongs to the phenylalanyl-tRNA synthetase beta subunit family. Type 2 subfamily.</text>
</comment>
<gene>
    <name type="primary">FARSB</name>
    <name type="synonym">FARSLB</name>
</gene>
<proteinExistence type="evidence at transcript level"/>
<sequence length="589" mass="66092">MPTVSVKRDLLFQALGRTYTDEEFDELCFEFGLELDEITSEKEIISKEQGNVKAAGASDVVLYKIDVPANRYDLLCLEGLVRGLQVFKERIKAPVYKRVMPDGKIQKLIITEETAKIRPFAVAAVLRNIKFTKDRYDSFIELQEKLHQNICRKRALVAIGTHDLDTLSGPFTYTAKRPSDIKFKPLNKTKEYTACELMNIYKTDNHLKHYLHIIENKPLYPVIYDSNGVVLSMPPIINGDHSRITVNTRNIFIECTGTDFTKAKIVLDIIVTMFSEYCENQFTVEAAEVVFPNGKSHTFPELAYRKEMVRADLINKKVGIRETPENLAKLLTRMYLKSEVIGDGNQIEIEIPPTRADIIHACDIVEDAAIAYGYSNIQMTLPKTYTIANQFPLNKLTELLRHDMAAAGFTEALTFALCSQEDIADKLGVDISATKAVHISSPKTAEFQVARTTLLPGLLKTIAANRKMPLPLKLFEISDIVIKDSNTDVGAKNYRHLCAVYYNKNPGFEIIHGLLDRIMQLLDVLPGEDKGGYVIKASEGPAFFPGRCAEIFARGQSVGKLGVLHPDVITKFELTMPCSSLEINIGPFL</sequence>
<reference key="1">
    <citation type="submission" date="2004-11" db="EMBL/GenBank/DDBJ databases">
        <authorList>
            <consortium name="The German cDNA consortium"/>
        </authorList>
    </citation>
    <scope>NUCLEOTIDE SEQUENCE [LARGE SCALE MRNA]</scope>
    <source>
        <tissue>Brain cortex</tissue>
    </source>
</reference>
<evidence type="ECO:0000250" key="1">
    <source>
        <dbReference type="UniProtKB" id="A5K464"/>
    </source>
</evidence>
<evidence type="ECO:0000250" key="2">
    <source>
        <dbReference type="UniProtKB" id="Q9NSD9"/>
    </source>
</evidence>
<evidence type="ECO:0000255" key="3">
    <source>
        <dbReference type="PROSITE-ProRule" id="PRU00816"/>
    </source>
</evidence>
<evidence type="ECO:0000305" key="4"/>
<name>SYFB_PONAB</name>
<dbReference type="EC" id="6.1.1.20" evidence="2"/>
<dbReference type="EMBL" id="CR860161">
    <property type="protein sequence ID" value="CAH92303.1"/>
    <property type="molecule type" value="mRNA"/>
</dbReference>
<dbReference type="SMR" id="Q5R7F7"/>
<dbReference type="STRING" id="9601.ENSPPYP00000014775"/>
<dbReference type="eggNOG" id="KOG2472">
    <property type="taxonomic scope" value="Eukaryota"/>
</dbReference>
<dbReference type="InParanoid" id="Q5R7F7"/>
<dbReference type="Proteomes" id="UP000001595">
    <property type="component" value="Unplaced"/>
</dbReference>
<dbReference type="GO" id="GO:0009328">
    <property type="term" value="C:phenylalanine-tRNA ligase complex"/>
    <property type="evidence" value="ECO:0000250"/>
    <property type="project" value="UniProtKB"/>
</dbReference>
<dbReference type="GO" id="GO:0005524">
    <property type="term" value="F:ATP binding"/>
    <property type="evidence" value="ECO:0007669"/>
    <property type="project" value="UniProtKB-KW"/>
</dbReference>
<dbReference type="GO" id="GO:0000287">
    <property type="term" value="F:magnesium ion binding"/>
    <property type="evidence" value="ECO:0000250"/>
    <property type="project" value="UniProtKB"/>
</dbReference>
<dbReference type="GO" id="GO:0004826">
    <property type="term" value="F:phenylalanine-tRNA ligase activity"/>
    <property type="evidence" value="ECO:0000250"/>
    <property type="project" value="UniProtKB"/>
</dbReference>
<dbReference type="GO" id="GO:0003723">
    <property type="term" value="F:RNA binding"/>
    <property type="evidence" value="ECO:0007669"/>
    <property type="project" value="InterPro"/>
</dbReference>
<dbReference type="GO" id="GO:0006432">
    <property type="term" value="P:phenylalanyl-tRNA aminoacylation"/>
    <property type="evidence" value="ECO:0000250"/>
    <property type="project" value="UniProtKB"/>
</dbReference>
<dbReference type="GO" id="GO:0051290">
    <property type="term" value="P:protein heterotetramerization"/>
    <property type="evidence" value="ECO:0000250"/>
    <property type="project" value="UniProtKB"/>
</dbReference>
<dbReference type="CDD" id="cd00769">
    <property type="entry name" value="PheRS_beta_core"/>
    <property type="match status" value="1"/>
</dbReference>
<dbReference type="FunFam" id="3.30.56.10:FF:000003">
    <property type="entry name" value="Phenylalanine--tRNA ligase beta subunit"/>
    <property type="match status" value="1"/>
</dbReference>
<dbReference type="FunFam" id="3.30.56.10:FF:000007">
    <property type="entry name" value="Phenylalanine--tRNA ligase beta subunit"/>
    <property type="match status" value="1"/>
</dbReference>
<dbReference type="FunFam" id="3.30.930.10:FF:000032">
    <property type="entry name" value="Phenylalanine--tRNA ligase beta subunit"/>
    <property type="match status" value="1"/>
</dbReference>
<dbReference type="FunFam" id="3.50.40.10:FF:000002">
    <property type="entry name" value="phenylalanine--tRNA ligase beta subunit"/>
    <property type="match status" value="1"/>
</dbReference>
<dbReference type="Gene3D" id="3.30.56.10">
    <property type="match status" value="2"/>
</dbReference>
<dbReference type="Gene3D" id="3.30.930.10">
    <property type="entry name" value="Bira Bifunctional Protein, Domain 2"/>
    <property type="match status" value="1"/>
</dbReference>
<dbReference type="Gene3D" id="3.50.40.10">
    <property type="entry name" value="Phenylalanyl-trna Synthetase, Chain B, domain 3"/>
    <property type="match status" value="1"/>
</dbReference>
<dbReference type="InterPro" id="IPR045864">
    <property type="entry name" value="aa-tRNA-synth_II/BPL/LPL"/>
</dbReference>
<dbReference type="InterPro" id="IPR005146">
    <property type="entry name" value="B3/B4_tRNA-bd"/>
</dbReference>
<dbReference type="InterPro" id="IPR009061">
    <property type="entry name" value="DNA-bd_dom_put_sf"/>
</dbReference>
<dbReference type="InterPro" id="IPR045060">
    <property type="entry name" value="Phe-tRNA-ligase_IIc_bsu"/>
</dbReference>
<dbReference type="InterPro" id="IPR004531">
    <property type="entry name" value="Phe-tRNA-synth_IIc_bsu_arc_euk"/>
</dbReference>
<dbReference type="InterPro" id="IPR020825">
    <property type="entry name" value="Phe-tRNA_synthase-like_B3/B4"/>
</dbReference>
<dbReference type="InterPro" id="IPR041616">
    <property type="entry name" value="PheRS_beta_core"/>
</dbReference>
<dbReference type="InterPro" id="IPR040659">
    <property type="entry name" value="PhetRS_B1"/>
</dbReference>
<dbReference type="InterPro" id="IPR005147">
    <property type="entry name" value="tRNA_synthase_B5-dom"/>
</dbReference>
<dbReference type="NCBIfam" id="TIGR00471">
    <property type="entry name" value="pheT_arch"/>
    <property type="match status" value="1"/>
</dbReference>
<dbReference type="PANTHER" id="PTHR10947:SF0">
    <property type="entry name" value="PHENYLALANINE--TRNA LIGASE BETA SUBUNIT"/>
    <property type="match status" value="1"/>
</dbReference>
<dbReference type="PANTHER" id="PTHR10947">
    <property type="entry name" value="PHENYLALANYL-TRNA SYNTHETASE BETA CHAIN AND LEUCINE-RICH REPEAT-CONTAINING PROTEIN 47"/>
    <property type="match status" value="1"/>
</dbReference>
<dbReference type="Pfam" id="PF03483">
    <property type="entry name" value="B3_4"/>
    <property type="match status" value="1"/>
</dbReference>
<dbReference type="Pfam" id="PF03484">
    <property type="entry name" value="B5"/>
    <property type="match status" value="1"/>
</dbReference>
<dbReference type="Pfam" id="PF18262">
    <property type="entry name" value="PhetRS_B1"/>
    <property type="match status" value="1"/>
</dbReference>
<dbReference type="Pfam" id="PF17759">
    <property type="entry name" value="tRNA_synthFbeta"/>
    <property type="match status" value="1"/>
</dbReference>
<dbReference type="SMART" id="SM00873">
    <property type="entry name" value="B3_4"/>
    <property type="match status" value="1"/>
</dbReference>
<dbReference type="SMART" id="SM00874">
    <property type="entry name" value="B5"/>
    <property type="match status" value="1"/>
</dbReference>
<dbReference type="SUPFAM" id="SSF55681">
    <property type="entry name" value="Class II aaRS and biotin synthetases"/>
    <property type="match status" value="1"/>
</dbReference>
<dbReference type="SUPFAM" id="SSF56037">
    <property type="entry name" value="PheT/TilS domain"/>
    <property type="match status" value="1"/>
</dbReference>
<dbReference type="SUPFAM" id="SSF46955">
    <property type="entry name" value="Putative DNA-binding domain"/>
    <property type="match status" value="2"/>
</dbReference>
<dbReference type="PROSITE" id="PS51483">
    <property type="entry name" value="B5"/>
    <property type="match status" value="1"/>
</dbReference>
<accession>Q5R7F7</accession>
<organism>
    <name type="scientific">Pongo abelii</name>
    <name type="common">Sumatran orangutan</name>
    <name type="synonym">Pongo pygmaeus abelii</name>
    <dbReference type="NCBI Taxonomy" id="9601"/>
    <lineage>
        <taxon>Eukaryota</taxon>
        <taxon>Metazoa</taxon>
        <taxon>Chordata</taxon>
        <taxon>Craniata</taxon>
        <taxon>Vertebrata</taxon>
        <taxon>Euteleostomi</taxon>
        <taxon>Mammalia</taxon>
        <taxon>Eutheria</taxon>
        <taxon>Euarchontoglires</taxon>
        <taxon>Primates</taxon>
        <taxon>Haplorrhini</taxon>
        <taxon>Catarrhini</taxon>
        <taxon>Hominidae</taxon>
        <taxon>Pongo</taxon>
    </lineage>
</organism>
<feature type="chain" id="PRO_0000284443" description="Phenylalanine--tRNA ligase beta subunit">
    <location>
        <begin position="1"/>
        <end position="589"/>
    </location>
</feature>
<feature type="domain" description="B5" evidence="3">
    <location>
        <begin position="302"/>
        <end position="379"/>
    </location>
</feature>
<feature type="binding site" evidence="3">
    <location>
        <position position="357"/>
    </location>
    <ligand>
        <name>Mg(2+)</name>
        <dbReference type="ChEBI" id="CHEBI:18420"/>
        <note>shared with alpha subunit</note>
    </ligand>
</feature>
<feature type="binding site" evidence="3">
    <location>
        <position position="363"/>
    </location>
    <ligand>
        <name>Mg(2+)</name>
        <dbReference type="ChEBI" id="CHEBI:18420"/>
        <note>shared with alpha subunit</note>
    </ligand>
</feature>
<feature type="binding site" evidence="3">
    <location>
        <position position="366"/>
    </location>
    <ligand>
        <name>Mg(2+)</name>
        <dbReference type="ChEBI" id="CHEBI:18420"/>
        <note>shared with alpha subunit</note>
    </ligand>
</feature>
<feature type="binding site" evidence="3">
    <location>
        <position position="367"/>
    </location>
    <ligand>
        <name>Mg(2+)</name>
        <dbReference type="ChEBI" id="CHEBI:18420"/>
        <note>shared with alpha subunit</note>
    </ligand>
</feature>